<evidence type="ECO:0000255" key="1">
    <source>
        <dbReference type="HAMAP-Rule" id="MF_01333"/>
    </source>
</evidence>
<evidence type="ECO:0000305" key="2"/>
<proteinExistence type="inferred from homology"/>
<dbReference type="EMBL" id="CP000826">
    <property type="protein sequence ID" value="ABV43625.1"/>
    <property type="molecule type" value="Genomic_DNA"/>
</dbReference>
<dbReference type="SMR" id="A8GKI5"/>
<dbReference type="STRING" id="399741.Spro_4532"/>
<dbReference type="KEGG" id="spe:Spro_4532"/>
<dbReference type="eggNOG" id="COG0094">
    <property type="taxonomic scope" value="Bacteria"/>
</dbReference>
<dbReference type="HOGENOM" id="CLU_061015_2_1_6"/>
<dbReference type="OrthoDB" id="9806626at2"/>
<dbReference type="GO" id="GO:1990904">
    <property type="term" value="C:ribonucleoprotein complex"/>
    <property type="evidence" value="ECO:0007669"/>
    <property type="project" value="UniProtKB-KW"/>
</dbReference>
<dbReference type="GO" id="GO:0005840">
    <property type="term" value="C:ribosome"/>
    <property type="evidence" value="ECO:0007669"/>
    <property type="project" value="UniProtKB-KW"/>
</dbReference>
<dbReference type="GO" id="GO:0019843">
    <property type="term" value="F:rRNA binding"/>
    <property type="evidence" value="ECO:0007669"/>
    <property type="project" value="UniProtKB-UniRule"/>
</dbReference>
<dbReference type="GO" id="GO:0003735">
    <property type="term" value="F:structural constituent of ribosome"/>
    <property type="evidence" value="ECO:0007669"/>
    <property type="project" value="InterPro"/>
</dbReference>
<dbReference type="GO" id="GO:0000049">
    <property type="term" value="F:tRNA binding"/>
    <property type="evidence" value="ECO:0007669"/>
    <property type="project" value="UniProtKB-UniRule"/>
</dbReference>
<dbReference type="GO" id="GO:0006412">
    <property type="term" value="P:translation"/>
    <property type="evidence" value="ECO:0007669"/>
    <property type="project" value="UniProtKB-UniRule"/>
</dbReference>
<dbReference type="FunFam" id="3.30.1440.10:FF:000001">
    <property type="entry name" value="50S ribosomal protein L5"/>
    <property type="match status" value="1"/>
</dbReference>
<dbReference type="Gene3D" id="3.30.1440.10">
    <property type="match status" value="1"/>
</dbReference>
<dbReference type="HAMAP" id="MF_01333_B">
    <property type="entry name" value="Ribosomal_uL5_B"/>
    <property type="match status" value="1"/>
</dbReference>
<dbReference type="InterPro" id="IPR002132">
    <property type="entry name" value="Ribosomal_uL5"/>
</dbReference>
<dbReference type="InterPro" id="IPR020930">
    <property type="entry name" value="Ribosomal_uL5_bac-type"/>
</dbReference>
<dbReference type="InterPro" id="IPR031309">
    <property type="entry name" value="Ribosomal_uL5_C"/>
</dbReference>
<dbReference type="InterPro" id="IPR022803">
    <property type="entry name" value="Ribosomal_uL5_dom_sf"/>
</dbReference>
<dbReference type="InterPro" id="IPR031310">
    <property type="entry name" value="Ribosomal_uL5_N"/>
</dbReference>
<dbReference type="NCBIfam" id="NF000585">
    <property type="entry name" value="PRK00010.1"/>
    <property type="match status" value="1"/>
</dbReference>
<dbReference type="PANTHER" id="PTHR11994">
    <property type="entry name" value="60S RIBOSOMAL PROTEIN L11-RELATED"/>
    <property type="match status" value="1"/>
</dbReference>
<dbReference type="Pfam" id="PF00281">
    <property type="entry name" value="Ribosomal_L5"/>
    <property type="match status" value="1"/>
</dbReference>
<dbReference type="Pfam" id="PF00673">
    <property type="entry name" value="Ribosomal_L5_C"/>
    <property type="match status" value="1"/>
</dbReference>
<dbReference type="PIRSF" id="PIRSF002161">
    <property type="entry name" value="Ribosomal_L5"/>
    <property type="match status" value="1"/>
</dbReference>
<dbReference type="SUPFAM" id="SSF55282">
    <property type="entry name" value="RL5-like"/>
    <property type="match status" value="1"/>
</dbReference>
<organism>
    <name type="scientific">Serratia proteamaculans (strain 568)</name>
    <dbReference type="NCBI Taxonomy" id="399741"/>
    <lineage>
        <taxon>Bacteria</taxon>
        <taxon>Pseudomonadati</taxon>
        <taxon>Pseudomonadota</taxon>
        <taxon>Gammaproteobacteria</taxon>
        <taxon>Enterobacterales</taxon>
        <taxon>Yersiniaceae</taxon>
        <taxon>Serratia</taxon>
    </lineage>
</organism>
<name>RL5_SERP5</name>
<sequence>MAKLHDYYKDEVVKQLMSQFDYNSVMQVPRVEKITLNMGVGEAIADKKLLDNAAADLAAISGQKPFITKARKSVAGFKIRQGYPIGCKVTLRGERMWEFFERLISIAVPRIRDFRGLSAKSFDGRGNYSMGVREQIIFPEIDYDKVDRVRGLDITITTTAKSDDEGRALLAAFNFPFRK</sequence>
<protein>
    <recommendedName>
        <fullName evidence="1">Large ribosomal subunit protein uL5</fullName>
    </recommendedName>
    <alternativeName>
        <fullName evidence="2">50S ribosomal protein L5</fullName>
    </alternativeName>
</protein>
<keyword id="KW-0687">Ribonucleoprotein</keyword>
<keyword id="KW-0689">Ribosomal protein</keyword>
<keyword id="KW-0694">RNA-binding</keyword>
<keyword id="KW-0699">rRNA-binding</keyword>
<keyword id="KW-0820">tRNA-binding</keyword>
<comment type="function">
    <text evidence="1">This is one of the proteins that bind and probably mediate the attachment of the 5S RNA into the large ribosomal subunit, where it forms part of the central protuberance. In the 70S ribosome it contacts protein S13 of the 30S subunit (bridge B1b), connecting the 2 subunits; this bridge is implicated in subunit movement. Contacts the P site tRNA; the 5S rRNA and some of its associated proteins might help stabilize positioning of ribosome-bound tRNAs.</text>
</comment>
<comment type="subunit">
    <text evidence="1">Part of the 50S ribosomal subunit; part of the 5S rRNA/L5/L18/L25 subcomplex. Contacts the 5S rRNA and the P site tRNA. Forms a bridge to the 30S subunit in the 70S ribosome.</text>
</comment>
<comment type="similarity">
    <text evidence="1">Belongs to the universal ribosomal protein uL5 family.</text>
</comment>
<reference key="1">
    <citation type="submission" date="2007-09" db="EMBL/GenBank/DDBJ databases">
        <title>Complete sequence of chromosome of Serratia proteamaculans 568.</title>
        <authorList>
            <consortium name="US DOE Joint Genome Institute"/>
            <person name="Copeland A."/>
            <person name="Lucas S."/>
            <person name="Lapidus A."/>
            <person name="Barry K."/>
            <person name="Glavina del Rio T."/>
            <person name="Dalin E."/>
            <person name="Tice H."/>
            <person name="Pitluck S."/>
            <person name="Chain P."/>
            <person name="Malfatti S."/>
            <person name="Shin M."/>
            <person name="Vergez L."/>
            <person name="Schmutz J."/>
            <person name="Larimer F."/>
            <person name="Land M."/>
            <person name="Hauser L."/>
            <person name="Kyrpides N."/>
            <person name="Kim E."/>
            <person name="Taghavi S."/>
            <person name="Newman L."/>
            <person name="Vangronsveld J."/>
            <person name="van der Lelie D."/>
            <person name="Richardson P."/>
        </authorList>
    </citation>
    <scope>NUCLEOTIDE SEQUENCE [LARGE SCALE GENOMIC DNA]</scope>
    <source>
        <strain>568</strain>
    </source>
</reference>
<accession>A8GKI5</accession>
<feature type="chain" id="PRO_1000067623" description="Large ribosomal subunit protein uL5">
    <location>
        <begin position="1"/>
        <end position="179"/>
    </location>
</feature>
<gene>
    <name evidence="1" type="primary">rplE</name>
    <name type="ordered locus">Spro_4532</name>
</gene>